<protein>
    <recommendedName>
        <fullName evidence="1">Large ribosomal subunit protein uL29</fullName>
    </recommendedName>
    <alternativeName>
        <fullName evidence="2">50S ribosomal protein L29</fullName>
    </alternativeName>
</protein>
<comment type="similarity">
    <text evidence="1">Belongs to the universal ribosomal protein uL29 family.</text>
</comment>
<keyword id="KW-1185">Reference proteome</keyword>
<keyword id="KW-0687">Ribonucleoprotein</keyword>
<keyword id="KW-0689">Ribosomal protein</keyword>
<dbReference type="EMBL" id="CP000471">
    <property type="protein sequence ID" value="ABK43374.1"/>
    <property type="molecule type" value="Genomic_DNA"/>
</dbReference>
<dbReference type="RefSeq" id="WP_011712533.1">
    <property type="nucleotide sequence ID" value="NC_008576.1"/>
</dbReference>
<dbReference type="SMR" id="A0L5Y1"/>
<dbReference type="STRING" id="156889.Mmc1_0855"/>
<dbReference type="KEGG" id="mgm:Mmc1_0855"/>
<dbReference type="eggNOG" id="COG0255">
    <property type="taxonomic scope" value="Bacteria"/>
</dbReference>
<dbReference type="HOGENOM" id="CLU_158491_1_0_5"/>
<dbReference type="OrthoDB" id="9815192at2"/>
<dbReference type="Proteomes" id="UP000002586">
    <property type="component" value="Chromosome"/>
</dbReference>
<dbReference type="GO" id="GO:0022625">
    <property type="term" value="C:cytosolic large ribosomal subunit"/>
    <property type="evidence" value="ECO:0007669"/>
    <property type="project" value="TreeGrafter"/>
</dbReference>
<dbReference type="GO" id="GO:0003735">
    <property type="term" value="F:structural constituent of ribosome"/>
    <property type="evidence" value="ECO:0007669"/>
    <property type="project" value="InterPro"/>
</dbReference>
<dbReference type="GO" id="GO:0006412">
    <property type="term" value="P:translation"/>
    <property type="evidence" value="ECO:0007669"/>
    <property type="project" value="UniProtKB-UniRule"/>
</dbReference>
<dbReference type="CDD" id="cd00427">
    <property type="entry name" value="Ribosomal_L29_HIP"/>
    <property type="match status" value="1"/>
</dbReference>
<dbReference type="FunFam" id="1.10.287.310:FF:000001">
    <property type="entry name" value="50S ribosomal protein L29"/>
    <property type="match status" value="1"/>
</dbReference>
<dbReference type="Gene3D" id="1.10.287.310">
    <property type="match status" value="1"/>
</dbReference>
<dbReference type="HAMAP" id="MF_00374">
    <property type="entry name" value="Ribosomal_uL29"/>
    <property type="match status" value="1"/>
</dbReference>
<dbReference type="InterPro" id="IPR050063">
    <property type="entry name" value="Ribosomal_protein_uL29"/>
</dbReference>
<dbReference type="InterPro" id="IPR001854">
    <property type="entry name" value="Ribosomal_uL29"/>
</dbReference>
<dbReference type="InterPro" id="IPR036049">
    <property type="entry name" value="Ribosomal_uL29_sf"/>
</dbReference>
<dbReference type="NCBIfam" id="TIGR00012">
    <property type="entry name" value="L29"/>
    <property type="match status" value="1"/>
</dbReference>
<dbReference type="PANTHER" id="PTHR10916">
    <property type="entry name" value="60S RIBOSOMAL PROTEIN L35/50S RIBOSOMAL PROTEIN L29"/>
    <property type="match status" value="1"/>
</dbReference>
<dbReference type="PANTHER" id="PTHR10916:SF0">
    <property type="entry name" value="LARGE RIBOSOMAL SUBUNIT PROTEIN UL29C"/>
    <property type="match status" value="1"/>
</dbReference>
<dbReference type="Pfam" id="PF00831">
    <property type="entry name" value="Ribosomal_L29"/>
    <property type="match status" value="1"/>
</dbReference>
<dbReference type="SUPFAM" id="SSF46561">
    <property type="entry name" value="Ribosomal protein L29 (L29p)"/>
    <property type="match status" value="1"/>
</dbReference>
<name>RL29_MAGMM</name>
<gene>
    <name evidence="1" type="primary">rpmC</name>
    <name type="ordered locus">Mmc1_0855</name>
</gene>
<evidence type="ECO:0000255" key="1">
    <source>
        <dbReference type="HAMAP-Rule" id="MF_00374"/>
    </source>
</evidence>
<evidence type="ECO:0000305" key="2"/>
<reference key="1">
    <citation type="journal article" date="2009" name="Appl. Environ. Microbiol.">
        <title>Complete genome sequence of the chemolithoautotrophic marine magnetotactic coccus strain MC-1.</title>
        <authorList>
            <person name="Schubbe S."/>
            <person name="Williams T.J."/>
            <person name="Xie G."/>
            <person name="Kiss H.E."/>
            <person name="Brettin T.S."/>
            <person name="Martinez D."/>
            <person name="Ross C.A."/>
            <person name="Schuler D."/>
            <person name="Cox B.L."/>
            <person name="Nealson K.H."/>
            <person name="Bazylinski D.A."/>
        </authorList>
    </citation>
    <scope>NUCLEOTIDE SEQUENCE [LARGE SCALE GENOMIC DNA]</scope>
    <source>
        <strain>ATCC BAA-1437 / JCM 17883 / MC-1</strain>
    </source>
</reference>
<organism>
    <name type="scientific">Magnetococcus marinus (strain ATCC BAA-1437 / JCM 17883 / MC-1)</name>
    <dbReference type="NCBI Taxonomy" id="156889"/>
    <lineage>
        <taxon>Bacteria</taxon>
        <taxon>Pseudomonadati</taxon>
        <taxon>Pseudomonadota</taxon>
        <taxon>Alphaproteobacteria</taxon>
        <taxon>Magnetococcales</taxon>
        <taxon>Magnetococcaceae</taxon>
        <taxon>Magnetococcus</taxon>
    </lineage>
</organism>
<proteinExistence type="inferred from homology"/>
<sequence length="67" mass="7796">MSVASEMREMSVEALDDKMKALYQEAFNLRFQHATAQLENTSRIRQVRREIALIKTVIGERKAKEEV</sequence>
<accession>A0L5Y1</accession>
<feature type="chain" id="PRO_1000194024" description="Large ribosomal subunit protein uL29">
    <location>
        <begin position="1"/>
        <end position="67"/>
    </location>
</feature>